<comment type="function">
    <text evidence="1">Catalyzes the attachment of threonine to tRNA(Thr) in a two-step reaction: L-threonine is first activated by ATP to form Thr-AMP and then transferred to the acceptor end of tRNA(Thr). Also edits incorrectly charged L-seryl-tRNA(Thr).</text>
</comment>
<comment type="catalytic activity">
    <reaction evidence="1">
        <text>tRNA(Thr) + L-threonine + ATP = L-threonyl-tRNA(Thr) + AMP + diphosphate + H(+)</text>
        <dbReference type="Rhea" id="RHEA:24624"/>
        <dbReference type="Rhea" id="RHEA-COMP:9670"/>
        <dbReference type="Rhea" id="RHEA-COMP:9704"/>
        <dbReference type="ChEBI" id="CHEBI:15378"/>
        <dbReference type="ChEBI" id="CHEBI:30616"/>
        <dbReference type="ChEBI" id="CHEBI:33019"/>
        <dbReference type="ChEBI" id="CHEBI:57926"/>
        <dbReference type="ChEBI" id="CHEBI:78442"/>
        <dbReference type="ChEBI" id="CHEBI:78534"/>
        <dbReference type="ChEBI" id="CHEBI:456215"/>
        <dbReference type="EC" id="6.1.1.3"/>
    </reaction>
</comment>
<comment type="cofactor">
    <cofactor evidence="1">
        <name>Zn(2+)</name>
        <dbReference type="ChEBI" id="CHEBI:29105"/>
    </cofactor>
    <text evidence="1">Binds 1 zinc ion per subunit.</text>
</comment>
<comment type="subunit">
    <text evidence="1">Homodimer.</text>
</comment>
<comment type="subcellular location">
    <subcellularLocation>
        <location evidence="1">Cytoplasm</location>
    </subcellularLocation>
</comment>
<comment type="similarity">
    <text evidence="1">Belongs to the class-II aminoacyl-tRNA synthetase family.</text>
</comment>
<gene>
    <name evidence="1" type="primary">thrS</name>
    <name type="ordered locus">YPK_1820</name>
</gene>
<name>SYT_YERPY</name>
<sequence>MPVITLPDGSQRHYDHAVSVLDVALDIGPGLAKACIAGRVNGELVDASDLIESDAQLAIITAKDAEGLEILRHSCAHLLGHAIKQLWPDTKMAIGPVIDNGFYYDVDIEHTLTQEDLALLEKRMHELADKDYDVIKKKVSWQEARDTFAARGEDYKVAILDENISRDDRPGLYHHEEYVDMCRGPHVPNMRFCHHFKLQKTSGAYWRGDSKNKMLQRIYGTAWGDKKQLNAYLQRLEEAAKRDHRKIGKQLDLYHMQEEAPGMVFWHNDGWTIFRELETFVRMKLKEYQYQEVKGPFMMDRVLWEKTGHWENYAEHMFTTSSENREYCIKPMNCPGHVQIFNQGLKSYRDLPLRMAEFGSCHRNEPSGALHGLMRVRGFTQDDAHVFCTEEQVRDEVNSCIKMVYDMYSTFGFEKIVVKLSTRPEKRIGSDELWTRAEDDLAAALTENGIPFDYQPGEGAFYGPKIEFTLHDCLDRAWQCGTVQLDFSLPGRLSASYIGENNDRQVPVMIHRAILGSMERFIGILTEEYAGFFPTWLAPVQVVVMNITDSQSDYVQQVTKKLQDAGIRAKADLRNEKIGFKIREHTLRRVPYMLVCGDKEVESGKIAVRTRRGKDLGSLDVNVVVDQLLAEIRSRSLHQLEE</sequence>
<accession>B1JJ17</accession>
<feature type="chain" id="PRO_1000098633" description="Threonine--tRNA ligase">
    <location>
        <begin position="1"/>
        <end position="642"/>
    </location>
</feature>
<feature type="domain" description="TGS" evidence="2">
    <location>
        <begin position="1"/>
        <end position="61"/>
    </location>
</feature>
<feature type="region of interest" description="Catalytic" evidence="1">
    <location>
        <begin position="243"/>
        <end position="534"/>
    </location>
</feature>
<feature type="binding site" evidence="1">
    <location>
        <position position="334"/>
    </location>
    <ligand>
        <name>Zn(2+)</name>
        <dbReference type="ChEBI" id="CHEBI:29105"/>
    </ligand>
</feature>
<feature type="binding site" evidence="1">
    <location>
        <position position="385"/>
    </location>
    <ligand>
        <name>Zn(2+)</name>
        <dbReference type="ChEBI" id="CHEBI:29105"/>
    </ligand>
</feature>
<feature type="binding site" evidence="1">
    <location>
        <position position="511"/>
    </location>
    <ligand>
        <name>Zn(2+)</name>
        <dbReference type="ChEBI" id="CHEBI:29105"/>
    </ligand>
</feature>
<keyword id="KW-0030">Aminoacyl-tRNA synthetase</keyword>
<keyword id="KW-0067">ATP-binding</keyword>
<keyword id="KW-0963">Cytoplasm</keyword>
<keyword id="KW-0436">Ligase</keyword>
<keyword id="KW-0479">Metal-binding</keyword>
<keyword id="KW-0547">Nucleotide-binding</keyword>
<keyword id="KW-0648">Protein biosynthesis</keyword>
<keyword id="KW-0694">RNA-binding</keyword>
<keyword id="KW-0820">tRNA-binding</keyword>
<keyword id="KW-0862">Zinc</keyword>
<protein>
    <recommendedName>
        <fullName evidence="1">Threonine--tRNA ligase</fullName>
        <ecNumber evidence="1">6.1.1.3</ecNumber>
    </recommendedName>
    <alternativeName>
        <fullName evidence="1">Threonyl-tRNA synthetase</fullName>
        <shortName evidence="1">ThrRS</shortName>
    </alternativeName>
</protein>
<dbReference type="EC" id="6.1.1.3" evidence="1"/>
<dbReference type="EMBL" id="CP000950">
    <property type="protein sequence ID" value="ACA68111.1"/>
    <property type="molecule type" value="Genomic_DNA"/>
</dbReference>
<dbReference type="RefSeq" id="WP_002211836.1">
    <property type="nucleotide sequence ID" value="NZ_CP009792.1"/>
</dbReference>
<dbReference type="SMR" id="B1JJ17"/>
<dbReference type="GeneID" id="57976245"/>
<dbReference type="KEGG" id="ypy:YPK_1820"/>
<dbReference type="PATRIC" id="fig|502800.11.peg.2488"/>
<dbReference type="GO" id="GO:0005829">
    <property type="term" value="C:cytosol"/>
    <property type="evidence" value="ECO:0007669"/>
    <property type="project" value="TreeGrafter"/>
</dbReference>
<dbReference type="GO" id="GO:0005524">
    <property type="term" value="F:ATP binding"/>
    <property type="evidence" value="ECO:0007669"/>
    <property type="project" value="UniProtKB-UniRule"/>
</dbReference>
<dbReference type="GO" id="GO:0046872">
    <property type="term" value="F:metal ion binding"/>
    <property type="evidence" value="ECO:0007669"/>
    <property type="project" value="UniProtKB-KW"/>
</dbReference>
<dbReference type="GO" id="GO:0004829">
    <property type="term" value="F:threonine-tRNA ligase activity"/>
    <property type="evidence" value="ECO:0007669"/>
    <property type="project" value="UniProtKB-UniRule"/>
</dbReference>
<dbReference type="GO" id="GO:0000049">
    <property type="term" value="F:tRNA binding"/>
    <property type="evidence" value="ECO:0007669"/>
    <property type="project" value="UniProtKB-KW"/>
</dbReference>
<dbReference type="GO" id="GO:0006435">
    <property type="term" value="P:threonyl-tRNA aminoacylation"/>
    <property type="evidence" value="ECO:0007669"/>
    <property type="project" value="UniProtKB-UniRule"/>
</dbReference>
<dbReference type="CDD" id="cd01667">
    <property type="entry name" value="TGS_ThrRS"/>
    <property type="match status" value="1"/>
</dbReference>
<dbReference type="CDD" id="cd00860">
    <property type="entry name" value="ThrRS_anticodon"/>
    <property type="match status" value="1"/>
</dbReference>
<dbReference type="CDD" id="cd00771">
    <property type="entry name" value="ThrRS_core"/>
    <property type="match status" value="1"/>
</dbReference>
<dbReference type="FunFam" id="3.10.20.30:FF:000005">
    <property type="entry name" value="Threonine--tRNA ligase"/>
    <property type="match status" value="1"/>
</dbReference>
<dbReference type="FunFam" id="3.30.54.20:FF:000002">
    <property type="entry name" value="Threonine--tRNA ligase"/>
    <property type="match status" value="1"/>
</dbReference>
<dbReference type="FunFam" id="3.30.930.10:FF:000002">
    <property type="entry name" value="Threonine--tRNA ligase"/>
    <property type="match status" value="1"/>
</dbReference>
<dbReference type="FunFam" id="3.40.50.800:FF:000001">
    <property type="entry name" value="Threonine--tRNA ligase"/>
    <property type="match status" value="1"/>
</dbReference>
<dbReference type="FunFam" id="3.30.980.10:FF:000005">
    <property type="entry name" value="Threonyl-tRNA synthetase, mitochondrial"/>
    <property type="match status" value="1"/>
</dbReference>
<dbReference type="Gene3D" id="3.10.20.30">
    <property type="match status" value="1"/>
</dbReference>
<dbReference type="Gene3D" id="3.30.54.20">
    <property type="match status" value="1"/>
</dbReference>
<dbReference type="Gene3D" id="3.40.50.800">
    <property type="entry name" value="Anticodon-binding domain"/>
    <property type="match status" value="1"/>
</dbReference>
<dbReference type="Gene3D" id="3.30.930.10">
    <property type="entry name" value="Bira Bifunctional Protein, Domain 2"/>
    <property type="match status" value="1"/>
</dbReference>
<dbReference type="Gene3D" id="3.30.980.10">
    <property type="entry name" value="Threonyl-trna Synthetase, Chain A, domain 2"/>
    <property type="match status" value="1"/>
</dbReference>
<dbReference type="HAMAP" id="MF_00184">
    <property type="entry name" value="Thr_tRNA_synth"/>
    <property type="match status" value="1"/>
</dbReference>
<dbReference type="InterPro" id="IPR002314">
    <property type="entry name" value="aa-tRNA-synt_IIb"/>
</dbReference>
<dbReference type="InterPro" id="IPR006195">
    <property type="entry name" value="aa-tRNA-synth_II"/>
</dbReference>
<dbReference type="InterPro" id="IPR045864">
    <property type="entry name" value="aa-tRNA-synth_II/BPL/LPL"/>
</dbReference>
<dbReference type="InterPro" id="IPR004154">
    <property type="entry name" value="Anticodon-bd"/>
</dbReference>
<dbReference type="InterPro" id="IPR036621">
    <property type="entry name" value="Anticodon-bd_dom_sf"/>
</dbReference>
<dbReference type="InterPro" id="IPR012675">
    <property type="entry name" value="Beta-grasp_dom_sf"/>
</dbReference>
<dbReference type="InterPro" id="IPR004095">
    <property type="entry name" value="TGS"/>
</dbReference>
<dbReference type="InterPro" id="IPR012676">
    <property type="entry name" value="TGS-like"/>
</dbReference>
<dbReference type="InterPro" id="IPR002320">
    <property type="entry name" value="Thr-tRNA-ligase_IIa"/>
</dbReference>
<dbReference type="InterPro" id="IPR018163">
    <property type="entry name" value="Thr/Ala-tRNA-synth_IIc_edit"/>
</dbReference>
<dbReference type="InterPro" id="IPR047246">
    <property type="entry name" value="ThrRS_anticodon"/>
</dbReference>
<dbReference type="InterPro" id="IPR033728">
    <property type="entry name" value="ThrRS_core"/>
</dbReference>
<dbReference type="InterPro" id="IPR012947">
    <property type="entry name" value="tRNA_SAD"/>
</dbReference>
<dbReference type="NCBIfam" id="TIGR00418">
    <property type="entry name" value="thrS"/>
    <property type="match status" value="1"/>
</dbReference>
<dbReference type="PANTHER" id="PTHR11451:SF44">
    <property type="entry name" value="THREONINE--TRNA LIGASE, CHLOROPLASTIC_MITOCHONDRIAL 2"/>
    <property type="match status" value="1"/>
</dbReference>
<dbReference type="PANTHER" id="PTHR11451">
    <property type="entry name" value="THREONINE-TRNA LIGASE"/>
    <property type="match status" value="1"/>
</dbReference>
<dbReference type="Pfam" id="PF03129">
    <property type="entry name" value="HGTP_anticodon"/>
    <property type="match status" value="1"/>
</dbReference>
<dbReference type="Pfam" id="PF02824">
    <property type="entry name" value="TGS"/>
    <property type="match status" value="1"/>
</dbReference>
<dbReference type="Pfam" id="PF00587">
    <property type="entry name" value="tRNA-synt_2b"/>
    <property type="match status" value="1"/>
</dbReference>
<dbReference type="Pfam" id="PF07973">
    <property type="entry name" value="tRNA_SAD"/>
    <property type="match status" value="1"/>
</dbReference>
<dbReference type="PRINTS" id="PR01047">
    <property type="entry name" value="TRNASYNTHTHR"/>
</dbReference>
<dbReference type="SMART" id="SM00863">
    <property type="entry name" value="tRNA_SAD"/>
    <property type="match status" value="1"/>
</dbReference>
<dbReference type="SUPFAM" id="SSF52954">
    <property type="entry name" value="Class II aaRS ABD-related"/>
    <property type="match status" value="1"/>
</dbReference>
<dbReference type="SUPFAM" id="SSF55681">
    <property type="entry name" value="Class II aaRS and biotin synthetases"/>
    <property type="match status" value="1"/>
</dbReference>
<dbReference type="SUPFAM" id="SSF81271">
    <property type="entry name" value="TGS-like"/>
    <property type="match status" value="1"/>
</dbReference>
<dbReference type="SUPFAM" id="SSF55186">
    <property type="entry name" value="ThrRS/AlaRS common domain"/>
    <property type="match status" value="1"/>
</dbReference>
<dbReference type="PROSITE" id="PS50862">
    <property type="entry name" value="AA_TRNA_LIGASE_II"/>
    <property type="match status" value="1"/>
</dbReference>
<dbReference type="PROSITE" id="PS51880">
    <property type="entry name" value="TGS"/>
    <property type="match status" value="1"/>
</dbReference>
<proteinExistence type="inferred from homology"/>
<reference key="1">
    <citation type="submission" date="2008-02" db="EMBL/GenBank/DDBJ databases">
        <title>Complete sequence of Yersinia pseudotuberculosis YPIII.</title>
        <authorList>
            <consortium name="US DOE Joint Genome Institute"/>
            <person name="Copeland A."/>
            <person name="Lucas S."/>
            <person name="Lapidus A."/>
            <person name="Glavina del Rio T."/>
            <person name="Dalin E."/>
            <person name="Tice H."/>
            <person name="Bruce D."/>
            <person name="Goodwin L."/>
            <person name="Pitluck S."/>
            <person name="Munk A.C."/>
            <person name="Brettin T."/>
            <person name="Detter J.C."/>
            <person name="Han C."/>
            <person name="Tapia R."/>
            <person name="Schmutz J."/>
            <person name="Larimer F."/>
            <person name="Land M."/>
            <person name="Hauser L."/>
            <person name="Challacombe J.F."/>
            <person name="Green L."/>
            <person name="Lindler L.E."/>
            <person name="Nikolich M.P."/>
            <person name="Richardson P."/>
        </authorList>
    </citation>
    <scope>NUCLEOTIDE SEQUENCE [LARGE SCALE GENOMIC DNA]</scope>
    <source>
        <strain>YPIII</strain>
    </source>
</reference>
<evidence type="ECO:0000255" key="1">
    <source>
        <dbReference type="HAMAP-Rule" id="MF_00184"/>
    </source>
</evidence>
<evidence type="ECO:0000255" key="2">
    <source>
        <dbReference type="PROSITE-ProRule" id="PRU01228"/>
    </source>
</evidence>
<organism>
    <name type="scientific">Yersinia pseudotuberculosis serotype O:3 (strain YPIII)</name>
    <dbReference type="NCBI Taxonomy" id="502800"/>
    <lineage>
        <taxon>Bacteria</taxon>
        <taxon>Pseudomonadati</taxon>
        <taxon>Pseudomonadota</taxon>
        <taxon>Gammaproteobacteria</taxon>
        <taxon>Enterobacterales</taxon>
        <taxon>Yersiniaceae</taxon>
        <taxon>Yersinia</taxon>
    </lineage>
</organism>